<keyword id="KW-0539">Nucleus</keyword>
<keyword id="KW-1267">Proteomics identification</keyword>
<keyword id="KW-1185">Reference proteome</keyword>
<keyword id="KW-0678">Repressor</keyword>
<keyword id="KW-0804">Transcription</keyword>
<keyword id="KW-0805">Transcription regulation</keyword>
<feature type="chain" id="PRO_0000127250" description="DNA-binding protein inhibitor ID-4">
    <location>
        <begin position="1"/>
        <end position="161"/>
    </location>
</feature>
<feature type="domain" description="bHLH" evidence="2">
    <location>
        <begin position="52"/>
        <end position="104"/>
    </location>
</feature>
<feature type="region of interest" description="Disordered" evidence="3">
    <location>
        <begin position="117"/>
        <end position="161"/>
    </location>
</feature>
<feature type="compositionally biased region" description="Pro residues" evidence="3">
    <location>
        <begin position="117"/>
        <end position="126"/>
    </location>
</feature>
<feature type="sequence conflict" description="In Ref. 3; AAA82882." evidence="4" ref="3">
    <original>SGRKA</original>
    <variation>RPLR</variation>
    <location>
        <begin position="10"/>
        <end position="14"/>
    </location>
</feature>
<feature type="sequence conflict" description="In Ref. 3; AAA82882." evidence="4" ref="3">
    <original>AA</original>
    <variation>Q</variation>
    <location>
        <begin position="39"/>
        <end position="40"/>
    </location>
</feature>
<feature type="sequence conflict" description="In Ref. 3; AAA82882." evidence="4" ref="3">
    <original>RLV</original>
    <variation>WL</variation>
    <location>
        <begin position="77"/>
        <end position="79"/>
    </location>
</feature>
<dbReference type="EMBL" id="U28368">
    <property type="protein sequence ID" value="AAA73923.1"/>
    <property type="molecule type" value="mRNA"/>
</dbReference>
<dbReference type="EMBL" id="Y07958">
    <property type="protein sequence ID" value="CAA69255.1"/>
    <property type="molecule type" value="mRNA"/>
</dbReference>
<dbReference type="EMBL" id="U16153">
    <property type="protein sequence ID" value="AAA82882.1"/>
    <property type="molecule type" value="mRNA"/>
</dbReference>
<dbReference type="EMBL" id="AL022726">
    <property type="status" value="NOT_ANNOTATED_CDS"/>
    <property type="molecule type" value="Genomic_DNA"/>
</dbReference>
<dbReference type="EMBL" id="BC014941">
    <property type="protein sequence ID" value="AAH14941.1"/>
    <property type="molecule type" value="mRNA"/>
</dbReference>
<dbReference type="CCDS" id="CCDS4544.1"/>
<dbReference type="PIR" id="G01855">
    <property type="entry name" value="G01855"/>
</dbReference>
<dbReference type="PIR" id="JE0306">
    <property type="entry name" value="JE0306"/>
</dbReference>
<dbReference type="RefSeq" id="NP_001537.1">
    <property type="nucleotide sequence ID" value="NM_001546.4"/>
</dbReference>
<dbReference type="SMR" id="P47928"/>
<dbReference type="BioGRID" id="109626">
    <property type="interactions" value="19"/>
</dbReference>
<dbReference type="FunCoup" id="P47928">
    <property type="interactions" value="2049"/>
</dbReference>
<dbReference type="IntAct" id="P47928">
    <property type="interactions" value="17"/>
</dbReference>
<dbReference type="MINT" id="P47928"/>
<dbReference type="STRING" id="9606.ENSP00000367972"/>
<dbReference type="GlyGen" id="P47928">
    <property type="glycosylation" value="1 site, 1 O-linked glycan (1 site)"/>
</dbReference>
<dbReference type="iPTMnet" id="P47928"/>
<dbReference type="PhosphoSitePlus" id="P47928"/>
<dbReference type="BioMuta" id="ID4"/>
<dbReference type="DMDM" id="1352422"/>
<dbReference type="jPOST" id="P47928"/>
<dbReference type="MassIVE" id="P47928"/>
<dbReference type="PaxDb" id="9606-ENSP00000367972"/>
<dbReference type="PeptideAtlas" id="P47928"/>
<dbReference type="ProteomicsDB" id="55823"/>
<dbReference type="Pumba" id="P47928"/>
<dbReference type="Antibodypedia" id="10414">
    <property type="antibodies" value="386 antibodies from 33 providers"/>
</dbReference>
<dbReference type="DNASU" id="3400"/>
<dbReference type="Ensembl" id="ENST00000378700.8">
    <property type="protein sequence ID" value="ENSP00000367972.3"/>
    <property type="gene ID" value="ENSG00000172201.12"/>
</dbReference>
<dbReference type="GeneID" id="3400"/>
<dbReference type="KEGG" id="hsa:3400"/>
<dbReference type="MANE-Select" id="ENST00000378700.8">
    <property type="protein sequence ID" value="ENSP00000367972.3"/>
    <property type="RefSeq nucleotide sequence ID" value="NM_001546.4"/>
    <property type="RefSeq protein sequence ID" value="NP_001537.1"/>
</dbReference>
<dbReference type="UCSC" id="uc003ncw.5">
    <property type="organism name" value="human"/>
</dbReference>
<dbReference type="AGR" id="HGNC:5363"/>
<dbReference type="CTD" id="3400"/>
<dbReference type="DisGeNET" id="3400"/>
<dbReference type="GeneCards" id="ID4"/>
<dbReference type="HGNC" id="HGNC:5363">
    <property type="gene designation" value="ID4"/>
</dbReference>
<dbReference type="HPA" id="ENSG00000172201">
    <property type="expression patterns" value="Tissue enhanced (thyroid)"/>
</dbReference>
<dbReference type="MalaCards" id="ID4"/>
<dbReference type="MIM" id="600581">
    <property type="type" value="gene"/>
</dbReference>
<dbReference type="neXtProt" id="NX_P47928"/>
<dbReference type="OpenTargets" id="ENSG00000172201"/>
<dbReference type="PharmGKB" id="PA29611"/>
<dbReference type="VEuPathDB" id="HostDB:ENSG00000172201"/>
<dbReference type="eggNOG" id="ENOG502S1WX">
    <property type="taxonomic scope" value="Eukaryota"/>
</dbReference>
<dbReference type="GeneTree" id="ENSGT00940000162435"/>
<dbReference type="HOGENOM" id="CLU_116790_2_0_1"/>
<dbReference type="InParanoid" id="P47928"/>
<dbReference type="OMA" id="FNIARCR"/>
<dbReference type="OrthoDB" id="10047910at2759"/>
<dbReference type="PAN-GO" id="P47928">
    <property type="GO annotations" value="5 GO annotations based on evolutionary models"/>
</dbReference>
<dbReference type="PhylomeDB" id="P47928"/>
<dbReference type="TreeFam" id="TF326217"/>
<dbReference type="PathwayCommons" id="P47928"/>
<dbReference type="Reactome" id="R-HSA-9031628">
    <property type="pathway name" value="NGF-stimulated transcription"/>
</dbReference>
<dbReference type="Reactome" id="R-HSA-9830364">
    <property type="pathway name" value="Formation of the nephric duct"/>
</dbReference>
<dbReference type="SignaLink" id="P47928"/>
<dbReference type="SIGNOR" id="P47928"/>
<dbReference type="BioGRID-ORCS" id="3400">
    <property type="hits" value="14 hits in 1169 CRISPR screens"/>
</dbReference>
<dbReference type="ChiTaRS" id="ID4">
    <property type="organism name" value="human"/>
</dbReference>
<dbReference type="GeneWiki" id="ID4"/>
<dbReference type="GenomeRNAi" id="3400"/>
<dbReference type="Pharos" id="P47928">
    <property type="development level" value="Tbio"/>
</dbReference>
<dbReference type="PRO" id="PR:P47928"/>
<dbReference type="Proteomes" id="UP000005640">
    <property type="component" value="Chromosome 6"/>
</dbReference>
<dbReference type="RNAct" id="P47928">
    <property type="molecule type" value="protein"/>
</dbReference>
<dbReference type="Bgee" id="ENSG00000172201">
    <property type="expression patterns" value="Expressed in blood vessel layer and 197 other cell types or tissues"/>
</dbReference>
<dbReference type="GO" id="GO:0005737">
    <property type="term" value="C:cytoplasm"/>
    <property type="evidence" value="ECO:0007669"/>
    <property type="project" value="Ensembl"/>
</dbReference>
<dbReference type="GO" id="GO:0005654">
    <property type="term" value="C:nucleoplasm"/>
    <property type="evidence" value="ECO:0000314"/>
    <property type="project" value="HPA"/>
</dbReference>
<dbReference type="GO" id="GO:0005634">
    <property type="term" value="C:nucleus"/>
    <property type="evidence" value="ECO:0000318"/>
    <property type="project" value="GO_Central"/>
</dbReference>
<dbReference type="GO" id="GO:0046983">
    <property type="term" value="F:protein dimerization activity"/>
    <property type="evidence" value="ECO:0007669"/>
    <property type="project" value="InterPro"/>
</dbReference>
<dbReference type="GO" id="GO:0061629">
    <property type="term" value="F:RNA polymerase II-specific DNA-binding transcription factor binding"/>
    <property type="evidence" value="ECO:0007669"/>
    <property type="project" value="Ensembl"/>
</dbReference>
<dbReference type="GO" id="GO:0003714">
    <property type="term" value="F:transcription corepressor activity"/>
    <property type="evidence" value="ECO:0000318"/>
    <property type="project" value="GO_Central"/>
</dbReference>
<dbReference type="GO" id="GO:0140416">
    <property type="term" value="F:transcription regulator inhibitor activity"/>
    <property type="evidence" value="ECO:0000314"/>
    <property type="project" value="ARUK-UCL"/>
</dbReference>
<dbReference type="GO" id="GO:0048708">
    <property type="term" value="P:astrocyte differentiation"/>
    <property type="evidence" value="ECO:0007669"/>
    <property type="project" value="Ensembl"/>
</dbReference>
<dbReference type="GO" id="GO:0022010">
    <property type="term" value="P:central nervous system myelination"/>
    <property type="evidence" value="ECO:0007669"/>
    <property type="project" value="Ensembl"/>
</dbReference>
<dbReference type="GO" id="GO:0021895">
    <property type="term" value="P:cerebral cortex neuron differentiation"/>
    <property type="evidence" value="ECO:0007669"/>
    <property type="project" value="Ensembl"/>
</dbReference>
<dbReference type="GO" id="GO:0007623">
    <property type="term" value="P:circadian rhythm"/>
    <property type="evidence" value="ECO:0007669"/>
    <property type="project" value="Ensembl"/>
</dbReference>
<dbReference type="GO" id="GO:0045444">
    <property type="term" value="P:fat cell differentiation"/>
    <property type="evidence" value="ECO:0007669"/>
    <property type="project" value="Ensembl"/>
</dbReference>
<dbReference type="GO" id="GO:0000082">
    <property type="term" value="P:G1/S transition of mitotic cell cycle"/>
    <property type="evidence" value="ECO:0007669"/>
    <property type="project" value="Ensembl"/>
</dbReference>
<dbReference type="GO" id="GO:0021766">
    <property type="term" value="P:hippocampus development"/>
    <property type="evidence" value="ECO:0007669"/>
    <property type="project" value="Ensembl"/>
</dbReference>
<dbReference type="GO" id="GO:0048712">
    <property type="term" value="P:negative regulation of astrocyte differentiation"/>
    <property type="evidence" value="ECO:0007669"/>
    <property type="project" value="Ensembl"/>
</dbReference>
<dbReference type="GO" id="GO:0045892">
    <property type="term" value="P:negative regulation of DNA-templated transcription"/>
    <property type="evidence" value="ECO:0000314"/>
    <property type="project" value="GDB"/>
</dbReference>
<dbReference type="GO" id="GO:0045599">
    <property type="term" value="P:negative regulation of fat cell differentiation"/>
    <property type="evidence" value="ECO:0007669"/>
    <property type="project" value="Ensembl"/>
</dbReference>
<dbReference type="GO" id="GO:0045665">
    <property type="term" value="P:negative regulation of neuron differentiation"/>
    <property type="evidence" value="ECO:0007669"/>
    <property type="project" value="Ensembl"/>
</dbReference>
<dbReference type="GO" id="GO:0048715">
    <property type="term" value="P:negative regulation of oligodendrocyte differentiation"/>
    <property type="evidence" value="ECO:0007669"/>
    <property type="project" value="Ensembl"/>
</dbReference>
<dbReference type="GO" id="GO:0000122">
    <property type="term" value="P:negative regulation of transcription by RNA polymerase II"/>
    <property type="evidence" value="ECO:0000314"/>
    <property type="project" value="ARUK-UCL"/>
</dbReference>
<dbReference type="GO" id="GO:0007405">
    <property type="term" value="P:neuroblast proliferation"/>
    <property type="evidence" value="ECO:0007669"/>
    <property type="project" value="Ensembl"/>
</dbReference>
<dbReference type="GO" id="GO:0030182">
    <property type="term" value="P:neuron differentiation"/>
    <property type="evidence" value="ECO:0000318"/>
    <property type="project" value="GO_Central"/>
</dbReference>
<dbReference type="GO" id="GO:0001649">
    <property type="term" value="P:osteoblast differentiation"/>
    <property type="evidence" value="ECO:0007669"/>
    <property type="project" value="Ensembl"/>
</dbReference>
<dbReference type="GO" id="GO:0010628">
    <property type="term" value="P:positive regulation of gene expression"/>
    <property type="evidence" value="ECO:0007669"/>
    <property type="project" value="Ensembl"/>
</dbReference>
<dbReference type="GO" id="GO:0002052">
    <property type="term" value="P:positive regulation of neuroblast proliferation"/>
    <property type="evidence" value="ECO:0007669"/>
    <property type="project" value="Ensembl"/>
</dbReference>
<dbReference type="GO" id="GO:0045944">
    <property type="term" value="P:positive regulation of transcription by RNA polymerase II"/>
    <property type="evidence" value="ECO:0007669"/>
    <property type="project" value="Ensembl"/>
</dbReference>
<dbReference type="GO" id="GO:0060740">
    <property type="term" value="P:prostate gland epithelium morphogenesis"/>
    <property type="evidence" value="ECO:0007669"/>
    <property type="project" value="Ensembl"/>
</dbReference>
<dbReference type="GO" id="GO:0060741">
    <property type="term" value="P:prostate gland stromal morphogenesis"/>
    <property type="evidence" value="ECO:0007669"/>
    <property type="project" value="Ensembl"/>
</dbReference>
<dbReference type="GO" id="GO:0008104">
    <property type="term" value="P:protein localization"/>
    <property type="evidence" value="ECO:0007669"/>
    <property type="project" value="Ensembl"/>
</dbReference>
<dbReference type="GO" id="GO:0061682">
    <property type="term" value="P:seminal vesicle morphogenesis"/>
    <property type="evidence" value="ECO:0007669"/>
    <property type="project" value="Ensembl"/>
</dbReference>
<dbReference type="CDD" id="cd19694">
    <property type="entry name" value="bHLH_dnHLH_ID4"/>
    <property type="match status" value="1"/>
</dbReference>
<dbReference type="FunFam" id="4.10.280.10:FF:000048">
    <property type="entry name" value="DNA-binding protein inhibitor ID-4"/>
    <property type="match status" value="1"/>
</dbReference>
<dbReference type="Gene3D" id="4.10.280.10">
    <property type="entry name" value="Helix-loop-helix DNA-binding domain"/>
    <property type="match status" value="1"/>
</dbReference>
<dbReference type="InterPro" id="IPR011598">
    <property type="entry name" value="bHLH_dom"/>
</dbReference>
<dbReference type="InterPro" id="IPR026052">
    <property type="entry name" value="DNA-bd_prot-inh"/>
</dbReference>
<dbReference type="InterPro" id="IPR036638">
    <property type="entry name" value="HLH_DNA-bd_sf"/>
</dbReference>
<dbReference type="PANTHER" id="PTHR11723">
    <property type="entry name" value="DNA-BINDING PROTEIN INHIBITOR"/>
    <property type="match status" value="1"/>
</dbReference>
<dbReference type="PANTHER" id="PTHR11723:SF6">
    <property type="entry name" value="DNA-BINDING PROTEIN INHIBITOR ID-4"/>
    <property type="match status" value="1"/>
</dbReference>
<dbReference type="Pfam" id="PF00010">
    <property type="entry name" value="HLH"/>
    <property type="match status" value="1"/>
</dbReference>
<dbReference type="SMART" id="SM00353">
    <property type="entry name" value="HLH"/>
    <property type="match status" value="1"/>
</dbReference>
<dbReference type="SUPFAM" id="SSF47459">
    <property type="entry name" value="HLH, helix-loop-helix DNA-binding domain"/>
    <property type="match status" value="1"/>
</dbReference>
<dbReference type="PROSITE" id="PS50888">
    <property type="entry name" value="BHLH"/>
    <property type="match status" value="1"/>
</dbReference>
<name>ID4_HUMAN</name>
<protein>
    <recommendedName>
        <fullName>DNA-binding protein inhibitor ID-4</fullName>
    </recommendedName>
    <alternativeName>
        <fullName>Class B basic helix-loop-helix protein 27</fullName>
        <shortName>bHLHb27</shortName>
    </alternativeName>
    <alternativeName>
        <fullName>Inhibitor of DNA binding 4</fullName>
    </alternativeName>
    <alternativeName>
        <fullName>Inhibitor of differentiation 4</fullName>
    </alternativeName>
</protein>
<organism>
    <name type="scientific">Homo sapiens</name>
    <name type="common">Human</name>
    <dbReference type="NCBI Taxonomy" id="9606"/>
    <lineage>
        <taxon>Eukaryota</taxon>
        <taxon>Metazoa</taxon>
        <taxon>Chordata</taxon>
        <taxon>Craniata</taxon>
        <taxon>Vertebrata</taxon>
        <taxon>Euteleostomi</taxon>
        <taxon>Mammalia</taxon>
        <taxon>Eutheria</taxon>
        <taxon>Euarchontoglires</taxon>
        <taxon>Primates</taxon>
        <taxon>Haplorrhini</taxon>
        <taxon>Catarrhini</taxon>
        <taxon>Hominidae</taxon>
        <taxon>Homo</taxon>
    </lineage>
</organism>
<sequence length="161" mass="16622">MKAVSPVRPSGRKAPSGCGGGELALRCLAEHGHSLGGSAAAAAAAAAARCKAAEAAADEPALCLQCDMNDCYSRLRRLVPTIPPNKKVSKVEILQHVIDYILDLQLALETHPALLRQPPPPAPPHHPAGTCPAAPPRTPLTALNTDPAGAVNKQGDSILCR</sequence>
<comment type="function">
    <text evidence="1">Transcriptional regulator (lacking a basic DNA binding domain) which negatively regulates the basic helix-loop-helix (bHLH) transcription factors by forming heterodimers and inhibiting their DNA binding and transcriptional activity. Implicated in regulating a variety of cellular processes, including cellular growth, senescence, differentiation, apoptosis, angiogenesis, and neoplastic transformation (By similarity).</text>
</comment>
<comment type="subunit">
    <text>Heterodimer with other HLH proteins.</text>
</comment>
<comment type="interaction">
    <interactant intactId="EBI-1754719">
        <id>P47928</id>
    </interactant>
    <interactant intactId="EBI-389883">
        <id>P16333</id>
        <label>NCK1</label>
    </interactant>
    <organismsDiffer>false</organismsDiffer>
    <experiments>3</experiments>
</comment>
<comment type="interaction">
    <interactant intactId="EBI-1754719">
        <id>P47928</id>
    </interactant>
    <interactant intactId="EBI-5235340">
        <id>Q7Z699</id>
        <label>SPRED1</label>
    </interactant>
    <organismsDiffer>false</organismsDiffer>
    <experiments>3</experiments>
</comment>
<comment type="subcellular location">
    <subcellularLocation>
        <location>Nucleus</location>
    </subcellularLocation>
</comment>
<comment type="online information" name="Atlas of Genetics and Cytogenetics in Oncology and Haematology">
    <link uri="https://atlasgeneticsoncology.org/gene/40916/ID4"/>
</comment>
<proteinExistence type="evidence at protein level"/>
<evidence type="ECO:0000250" key="1"/>
<evidence type="ECO:0000255" key="2">
    <source>
        <dbReference type="PROSITE-ProRule" id="PRU00981"/>
    </source>
</evidence>
<evidence type="ECO:0000256" key="3">
    <source>
        <dbReference type="SAM" id="MobiDB-lite"/>
    </source>
</evidence>
<evidence type="ECO:0000305" key="4"/>
<accession>P47928</accession>
<accession>Q13005</accession>
<gene>
    <name type="primary">ID4</name>
    <name type="synonym">BHLHB27</name>
</gene>
<reference key="1">
    <citation type="submission" date="1995-06" db="EMBL/GenBank/DDBJ databases">
        <authorList>
            <person name="Kiesling T.L."/>
            <person name="Christy B.A."/>
        </authorList>
    </citation>
    <scope>NUCLEOTIDE SEQUENCE [MRNA]</scope>
    <source>
        <tissue>Abdominal adipose tissue</tissue>
    </source>
</reference>
<reference key="2">
    <citation type="journal article" date="1998" name="DNA Res.">
        <title>cDNA cloning, tissue distribution and chromosomal localization of the human ID4 gene.</title>
        <authorList>
            <person name="Rigolet M."/>
            <person name="Rich T."/>
            <person name="Gross-Morand M.S."/>
            <person name="Molina-Gomes D."/>
            <person name="Viegas-Pequignot E."/>
            <person name="Junien C."/>
        </authorList>
    </citation>
    <scope>NUCLEOTIDE SEQUENCE [MRNA]</scope>
</reference>
<reference key="3">
    <citation type="journal article" date="1995" name="Genomics">
        <title>Molecular cloning of ID4, a novel dominant negative helix-loop-helix human gene on chromosome 6p21.3-p22.</title>
        <authorList>
            <person name="Pagliuca A."/>
            <person name="Bartoli P.C."/>
            <person name="Saccone S."/>
            <person name="Della Valle G."/>
            <person name="Lania L."/>
        </authorList>
    </citation>
    <scope>NUCLEOTIDE SEQUENCE [MRNA]</scope>
</reference>
<reference key="4">
    <citation type="journal article" date="2003" name="Nature">
        <title>The DNA sequence and analysis of human chromosome 6.</title>
        <authorList>
            <person name="Mungall A.J."/>
            <person name="Palmer S.A."/>
            <person name="Sims S.K."/>
            <person name="Edwards C.A."/>
            <person name="Ashurst J.L."/>
            <person name="Wilming L."/>
            <person name="Jones M.C."/>
            <person name="Horton R."/>
            <person name="Hunt S.E."/>
            <person name="Scott C.E."/>
            <person name="Gilbert J.G.R."/>
            <person name="Clamp M.E."/>
            <person name="Bethel G."/>
            <person name="Milne S."/>
            <person name="Ainscough R."/>
            <person name="Almeida J.P."/>
            <person name="Ambrose K.D."/>
            <person name="Andrews T.D."/>
            <person name="Ashwell R.I.S."/>
            <person name="Babbage A.K."/>
            <person name="Bagguley C.L."/>
            <person name="Bailey J."/>
            <person name="Banerjee R."/>
            <person name="Barker D.J."/>
            <person name="Barlow K.F."/>
            <person name="Bates K."/>
            <person name="Beare D.M."/>
            <person name="Beasley H."/>
            <person name="Beasley O."/>
            <person name="Bird C.P."/>
            <person name="Blakey S.E."/>
            <person name="Bray-Allen S."/>
            <person name="Brook J."/>
            <person name="Brown A.J."/>
            <person name="Brown J.Y."/>
            <person name="Burford D.C."/>
            <person name="Burrill W."/>
            <person name="Burton J."/>
            <person name="Carder C."/>
            <person name="Carter N.P."/>
            <person name="Chapman J.C."/>
            <person name="Clark S.Y."/>
            <person name="Clark G."/>
            <person name="Clee C.M."/>
            <person name="Clegg S."/>
            <person name="Cobley V."/>
            <person name="Collier R.E."/>
            <person name="Collins J.E."/>
            <person name="Colman L.K."/>
            <person name="Corby N.R."/>
            <person name="Coville G.J."/>
            <person name="Culley K.M."/>
            <person name="Dhami P."/>
            <person name="Davies J."/>
            <person name="Dunn M."/>
            <person name="Earthrowl M.E."/>
            <person name="Ellington A.E."/>
            <person name="Evans K.A."/>
            <person name="Faulkner L."/>
            <person name="Francis M.D."/>
            <person name="Frankish A."/>
            <person name="Frankland J."/>
            <person name="French L."/>
            <person name="Garner P."/>
            <person name="Garnett J."/>
            <person name="Ghori M.J."/>
            <person name="Gilby L.M."/>
            <person name="Gillson C.J."/>
            <person name="Glithero R.J."/>
            <person name="Grafham D.V."/>
            <person name="Grant M."/>
            <person name="Gribble S."/>
            <person name="Griffiths C."/>
            <person name="Griffiths M.N.D."/>
            <person name="Hall R."/>
            <person name="Halls K.S."/>
            <person name="Hammond S."/>
            <person name="Harley J.L."/>
            <person name="Hart E.A."/>
            <person name="Heath P.D."/>
            <person name="Heathcott R."/>
            <person name="Holmes S.J."/>
            <person name="Howden P.J."/>
            <person name="Howe K.L."/>
            <person name="Howell G.R."/>
            <person name="Huckle E."/>
            <person name="Humphray S.J."/>
            <person name="Humphries M.D."/>
            <person name="Hunt A.R."/>
            <person name="Johnson C.M."/>
            <person name="Joy A.A."/>
            <person name="Kay M."/>
            <person name="Keenan S.J."/>
            <person name="Kimberley A.M."/>
            <person name="King A."/>
            <person name="Laird G.K."/>
            <person name="Langford C."/>
            <person name="Lawlor S."/>
            <person name="Leongamornlert D.A."/>
            <person name="Leversha M."/>
            <person name="Lloyd C.R."/>
            <person name="Lloyd D.M."/>
            <person name="Loveland J.E."/>
            <person name="Lovell J."/>
            <person name="Martin S."/>
            <person name="Mashreghi-Mohammadi M."/>
            <person name="Maslen G.L."/>
            <person name="Matthews L."/>
            <person name="McCann O.T."/>
            <person name="McLaren S.J."/>
            <person name="McLay K."/>
            <person name="McMurray A."/>
            <person name="Moore M.J.F."/>
            <person name="Mullikin J.C."/>
            <person name="Niblett D."/>
            <person name="Nickerson T."/>
            <person name="Novik K.L."/>
            <person name="Oliver K."/>
            <person name="Overton-Larty E.K."/>
            <person name="Parker A."/>
            <person name="Patel R."/>
            <person name="Pearce A.V."/>
            <person name="Peck A.I."/>
            <person name="Phillimore B.J.C.T."/>
            <person name="Phillips S."/>
            <person name="Plumb R.W."/>
            <person name="Porter K.M."/>
            <person name="Ramsey Y."/>
            <person name="Ranby S.A."/>
            <person name="Rice C.M."/>
            <person name="Ross M.T."/>
            <person name="Searle S.M."/>
            <person name="Sehra H.K."/>
            <person name="Sheridan E."/>
            <person name="Skuce C.D."/>
            <person name="Smith S."/>
            <person name="Smith M."/>
            <person name="Spraggon L."/>
            <person name="Squares S.L."/>
            <person name="Steward C.A."/>
            <person name="Sycamore N."/>
            <person name="Tamlyn-Hall G."/>
            <person name="Tester J."/>
            <person name="Theaker A.J."/>
            <person name="Thomas D.W."/>
            <person name="Thorpe A."/>
            <person name="Tracey A."/>
            <person name="Tromans A."/>
            <person name="Tubby B."/>
            <person name="Wall M."/>
            <person name="Wallis J.M."/>
            <person name="West A.P."/>
            <person name="White S.S."/>
            <person name="Whitehead S.L."/>
            <person name="Whittaker H."/>
            <person name="Wild A."/>
            <person name="Willey D.J."/>
            <person name="Wilmer T.E."/>
            <person name="Wood J.M."/>
            <person name="Wray P.W."/>
            <person name="Wyatt J.C."/>
            <person name="Young L."/>
            <person name="Younger R.M."/>
            <person name="Bentley D.R."/>
            <person name="Coulson A."/>
            <person name="Durbin R.M."/>
            <person name="Hubbard T."/>
            <person name="Sulston J.E."/>
            <person name="Dunham I."/>
            <person name="Rogers J."/>
            <person name="Beck S."/>
        </authorList>
    </citation>
    <scope>NUCLEOTIDE SEQUENCE [LARGE SCALE GENOMIC DNA]</scope>
</reference>
<reference key="5">
    <citation type="journal article" date="2004" name="Genome Res.">
        <title>The status, quality, and expansion of the NIH full-length cDNA project: the Mammalian Gene Collection (MGC).</title>
        <authorList>
            <consortium name="The MGC Project Team"/>
        </authorList>
    </citation>
    <scope>NUCLEOTIDE SEQUENCE [LARGE SCALE MRNA]</scope>
    <source>
        <tissue>Uterus</tissue>
    </source>
</reference>